<reference key="1">
    <citation type="journal article" date="2009" name="BMC Genomics">
        <title>Metabolic analysis of the soil microbe Dechloromonas aromatica str. RCB: indications of a surprisingly complex life-style and cryptic anaerobic pathways for aromatic degradation.</title>
        <authorList>
            <person name="Salinero K.K."/>
            <person name="Keller K."/>
            <person name="Feil W.S."/>
            <person name="Feil H."/>
            <person name="Trong S."/>
            <person name="Di Bartolo G."/>
            <person name="Lapidus A."/>
        </authorList>
    </citation>
    <scope>NUCLEOTIDE SEQUENCE [LARGE SCALE GENOMIC DNA]</scope>
    <source>
        <strain>RCB</strain>
    </source>
</reference>
<feature type="chain" id="PRO_0000136150" description="Histidine--tRNA ligase">
    <location>
        <begin position="1"/>
        <end position="429"/>
    </location>
</feature>
<proteinExistence type="inferred from homology"/>
<comment type="catalytic activity">
    <reaction evidence="1">
        <text>tRNA(His) + L-histidine + ATP = L-histidyl-tRNA(His) + AMP + diphosphate + H(+)</text>
        <dbReference type="Rhea" id="RHEA:17313"/>
        <dbReference type="Rhea" id="RHEA-COMP:9665"/>
        <dbReference type="Rhea" id="RHEA-COMP:9689"/>
        <dbReference type="ChEBI" id="CHEBI:15378"/>
        <dbReference type="ChEBI" id="CHEBI:30616"/>
        <dbReference type="ChEBI" id="CHEBI:33019"/>
        <dbReference type="ChEBI" id="CHEBI:57595"/>
        <dbReference type="ChEBI" id="CHEBI:78442"/>
        <dbReference type="ChEBI" id="CHEBI:78527"/>
        <dbReference type="ChEBI" id="CHEBI:456215"/>
        <dbReference type="EC" id="6.1.1.21"/>
    </reaction>
</comment>
<comment type="subunit">
    <text evidence="1">Homodimer.</text>
</comment>
<comment type="subcellular location">
    <subcellularLocation>
        <location evidence="1">Cytoplasm</location>
    </subcellularLocation>
</comment>
<comment type="similarity">
    <text evidence="1">Belongs to the class-II aminoacyl-tRNA synthetase family.</text>
</comment>
<sequence>MSQTLQAVRGMNDVLPDEAEFWELFEDTIRSWLKGYGYRPIRMPIVEPTPLFKRAIGEVTDIVEKEMYSFVDGLNGEALTLRPEGTAGCVRAVIEHNLAARQTQRLYYIGQMFRHERPQKGRYRQFHQVGVESFGMAGPDIDAEMILMGARLWADLGLDGIELQLNSLGQPEERALHRAALITYFEENAELLDEDAKRRLHTNPLRILDTKNPAMQELCAAAPKLIDYLGAESLAHFEGVQRVLRDAGVPFTINPRLVRGLDYYNLTVFEWVTDKLGAQGTVCAGGRYDGLVEQLGGKPTPACGFAMGVERLIALIRESGGEPAAPAPDVYLVHQGEAAARQAFRVAEGLRDQGINVLQHCGGGSFKSQMKKADGSGATFAVIIGDDEAATGEAQLKSLRAEGSAQLKLKVDDLAEAIIGQLIDSDEEE</sequence>
<evidence type="ECO:0000255" key="1">
    <source>
        <dbReference type="HAMAP-Rule" id="MF_00127"/>
    </source>
</evidence>
<name>SYH_DECAR</name>
<accession>Q47BR7</accession>
<protein>
    <recommendedName>
        <fullName evidence="1">Histidine--tRNA ligase</fullName>
        <ecNumber evidence="1">6.1.1.21</ecNumber>
    </recommendedName>
    <alternativeName>
        <fullName evidence="1">Histidyl-tRNA synthetase</fullName>
        <shortName evidence="1">HisRS</shortName>
    </alternativeName>
</protein>
<gene>
    <name evidence="1" type="primary">hisS</name>
    <name type="ordered locus">Daro_2984</name>
</gene>
<organism>
    <name type="scientific">Dechloromonas aromatica (strain RCB)</name>
    <dbReference type="NCBI Taxonomy" id="159087"/>
    <lineage>
        <taxon>Bacteria</taxon>
        <taxon>Pseudomonadati</taxon>
        <taxon>Pseudomonadota</taxon>
        <taxon>Betaproteobacteria</taxon>
        <taxon>Rhodocyclales</taxon>
        <taxon>Azonexaceae</taxon>
        <taxon>Dechloromonas</taxon>
    </lineage>
</organism>
<dbReference type="EC" id="6.1.1.21" evidence="1"/>
<dbReference type="EMBL" id="CP000089">
    <property type="protein sequence ID" value="AAZ47714.1"/>
    <property type="molecule type" value="Genomic_DNA"/>
</dbReference>
<dbReference type="SMR" id="Q47BR7"/>
<dbReference type="STRING" id="159087.Daro_2984"/>
<dbReference type="KEGG" id="dar:Daro_2984"/>
<dbReference type="eggNOG" id="COG0124">
    <property type="taxonomic scope" value="Bacteria"/>
</dbReference>
<dbReference type="HOGENOM" id="CLU_025113_1_1_4"/>
<dbReference type="OrthoDB" id="9800814at2"/>
<dbReference type="GO" id="GO:0005737">
    <property type="term" value="C:cytoplasm"/>
    <property type="evidence" value="ECO:0007669"/>
    <property type="project" value="UniProtKB-SubCell"/>
</dbReference>
<dbReference type="GO" id="GO:0005524">
    <property type="term" value="F:ATP binding"/>
    <property type="evidence" value="ECO:0007669"/>
    <property type="project" value="UniProtKB-UniRule"/>
</dbReference>
<dbReference type="GO" id="GO:0004821">
    <property type="term" value="F:histidine-tRNA ligase activity"/>
    <property type="evidence" value="ECO:0007669"/>
    <property type="project" value="UniProtKB-UniRule"/>
</dbReference>
<dbReference type="GO" id="GO:0006427">
    <property type="term" value="P:histidyl-tRNA aminoacylation"/>
    <property type="evidence" value="ECO:0007669"/>
    <property type="project" value="UniProtKB-UniRule"/>
</dbReference>
<dbReference type="CDD" id="cd00773">
    <property type="entry name" value="HisRS-like_core"/>
    <property type="match status" value="1"/>
</dbReference>
<dbReference type="CDD" id="cd00859">
    <property type="entry name" value="HisRS_anticodon"/>
    <property type="match status" value="1"/>
</dbReference>
<dbReference type="FunFam" id="3.30.930.10:FF:000005">
    <property type="entry name" value="Histidine--tRNA ligase"/>
    <property type="match status" value="1"/>
</dbReference>
<dbReference type="Gene3D" id="3.40.50.800">
    <property type="entry name" value="Anticodon-binding domain"/>
    <property type="match status" value="1"/>
</dbReference>
<dbReference type="Gene3D" id="3.30.930.10">
    <property type="entry name" value="Bira Bifunctional Protein, Domain 2"/>
    <property type="match status" value="1"/>
</dbReference>
<dbReference type="HAMAP" id="MF_00127">
    <property type="entry name" value="His_tRNA_synth"/>
    <property type="match status" value="1"/>
</dbReference>
<dbReference type="InterPro" id="IPR006195">
    <property type="entry name" value="aa-tRNA-synth_II"/>
</dbReference>
<dbReference type="InterPro" id="IPR045864">
    <property type="entry name" value="aa-tRNA-synth_II/BPL/LPL"/>
</dbReference>
<dbReference type="InterPro" id="IPR004154">
    <property type="entry name" value="Anticodon-bd"/>
</dbReference>
<dbReference type="InterPro" id="IPR036621">
    <property type="entry name" value="Anticodon-bd_dom_sf"/>
</dbReference>
<dbReference type="InterPro" id="IPR015807">
    <property type="entry name" value="His-tRNA-ligase"/>
</dbReference>
<dbReference type="InterPro" id="IPR041715">
    <property type="entry name" value="HisRS-like_core"/>
</dbReference>
<dbReference type="InterPro" id="IPR004516">
    <property type="entry name" value="HisRS/HisZ"/>
</dbReference>
<dbReference type="InterPro" id="IPR033656">
    <property type="entry name" value="HisRS_anticodon"/>
</dbReference>
<dbReference type="NCBIfam" id="TIGR00442">
    <property type="entry name" value="hisS"/>
    <property type="match status" value="1"/>
</dbReference>
<dbReference type="PANTHER" id="PTHR43707:SF1">
    <property type="entry name" value="HISTIDINE--TRNA LIGASE, MITOCHONDRIAL-RELATED"/>
    <property type="match status" value="1"/>
</dbReference>
<dbReference type="PANTHER" id="PTHR43707">
    <property type="entry name" value="HISTIDYL-TRNA SYNTHETASE"/>
    <property type="match status" value="1"/>
</dbReference>
<dbReference type="Pfam" id="PF03129">
    <property type="entry name" value="HGTP_anticodon"/>
    <property type="match status" value="1"/>
</dbReference>
<dbReference type="Pfam" id="PF13393">
    <property type="entry name" value="tRNA-synt_His"/>
    <property type="match status" value="1"/>
</dbReference>
<dbReference type="PIRSF" id="PIRSF001549">
    <property type="entry name" value="His-tRNA_synth"/>
    <property type="match status" value="1"/>
</dbReference>
<dbReference type="SUPFAM" id="SSF52954">
    <property type="entry name" value="Class II aaRS ABD-related"/>
    <property type="match status" value="1"/>
</dbReference>
<dbReference type="SUPFAM" id="SSF55681">
    <property type="entry name" value="Class II aaRS and biotin synthetases"/>
    <property type="match status" value="1"/>
</dbReference>
<dbReference type="PROSITE" id="PS50862">
    <property type="entry name" value="AA_TRNA_LIGASE_II"/>
    <property type="match status" value="1"/>
</dbReference>
<keyword id="KW-0030">Aminoacyl-tRNA synthetase</keyword>
<keyword id="KW-0067">ATP-binding</keyword>
<keyword id="KW-0963">Cytoplasm</keyword>
<keyword id="KW-0436">Ligase</keyword>
<keyword id="KW-0547">Nucleotide-binding</keyword>
<keyword id="KW-0648">Protein biosynthesis</keyword>